<accession>Q18LE4</accession>
<sequence length="278" mass="32538">MTRVSSVSASCTTTNPPKNTREDMSRVGAHLTIQNDFRHLIMQITEKIFTKSSLGSMKFEELKIIHMGCQTVFMRGILTLLTRECFWNTGNDDIRILNRNIPTSYWLEIHTLLEKFIPTTDPWIFSDVYAENTLQYLQKQNACVRLYQEYMLSKLGLYVPLPDFLREDVNILFHLGTVTQHRLFKTFMIFQKYWGIDSYEPIVRTIVRKTWFFFLILWGQLRVDSNVFCEQDFGHEAGILSYLQSDYLSFMGIGQIDISINKSSFPDVFSITDIKPLM</sequence>
<organismHost>
    <name type="scientific">Elephas maximus</name>
    <name type="common">Indian elephant</name>
    <dbReference type="NCBI Taxonomy" id="9783"/>
</organismHost>
<organismHost>
    <name type="scientific">Loxodonta africana</name>
    <name type="common">African elephant</name>
    <dbReference type="NCBI Taxonomy" id="9785"/>
</organismHost>
<organismHost>
    <name type="scientific">Loxodonta cyclotis</name>
    <name type="common">African forest elephant</name>
    <dbReference type="NCBI Taxonomy" id="99490"/>
</organismHost>
<evidence type="ECO:0000256" key="1">
    <source>
        <dbReference type="SAM" id="MobiDB-lite"/>
    </source>
</evidence>
<evidence type="ECO:0000305" key="2"/>
<organism>
    <name type="scientific">Elephantid herpesvirus 1 (isolate Asian elephant/Berlin/Kiba/1998)</name>
    <name type="common">EIHV-1</name>
    <name type="synonym">Elephant endotheliotropic herpesvirus</name>
    <dbReference type="NCBI Taxonomy" id="654902"/>
    <lineage>
        <taxon>Viruses</taxon>
        <taxon>Duplodnaviria</taxon>
        <taxon>Heunggongvirae</taxon>
        <taxon>Peploviricota</taxon>
        <taxon>Herviviricetes</taxon>
        <taxon>Herpesvirales</taxon>
        <taxon>Orthoherpesviridae</taxon>
        <taxon>Betaherpesvirinae</taxon>
        <taxon>Proboscivirus</taxon>
        <taxon>Proboscivirus elephantidbeta1</taxon>
        <taxon>Elephantid herpesvirus 1</taxon>
    </lineage>
</organism>
<comment type="similarity">
    <text evidence="2">Belongs to the herpesviridae UL79 family.</text>
</comment>
<feature type="chain" id="PRO_0000408169" description="Protein U52">
    <location>
        <begin position="1"/>
        <end position="278"/>
    </location>
</feature>
<feature type="region of interest" description="Disordered" evidence="1">
    <location>
        <begin position="1"/>
        <end position="25"/>
    </location>
</feature>
<feature type="compositionally biased region" description="Polar residues" evidence="1">
    <location>
        <begin position="1"/>
        <end position="18"/>
    </location>
</feature>
<reference key="1">
    <citation type="journal article" date="2007" name="J. Virol.">
        <title>Identification of novel rodent herpesviruses, including the first gammaherpesvirus of Mus musculus.</title>
        <authorList>
            <person name="Ehlers B."/>
            <person name="Kuchler J."/>
            <person name="Yasmum N."/>
            <person name="Dural G."/>
            <person name="Voigt S."/>
            <person name="Schmidt-Chanasit J."/>
            <person name="Jakel T."/>
            <person name="Matuschka F.R."/>
            <person name="Richter D."/>
            <person name="Essbauer S."/>
            <person name="Hughes D.J."/>
            <person name="Summers C."/>
            <person name="Bennett M."/>
            <person name="Stewart J.P."/>
            <person name="Ulrich R.G."/>
        </authorList>
    </citation>
    <scope>NUCLEOTIDE SEQUENCE [GENOMIC DNA]</scope>
</reference>
<reference key="2">
    <citation type="journal article" date="2001" name="J. Gen. Virol.">
        <title>Genetic and ultrastructural characterization of a European isolate of the fatal endotheliotropic elephant herpesvirus.</title>
        <authorList>
            <person name="Ehlers B."/>
            <person name="Burkhardt S."/>
            <person name="Goltz M."/>
            <person name="Bergmann V."/>
            <person name="Ochs A."/>
            <person name="Weiler H."/>
            <person name="Hentschke J."/>
        </authorList>
    </citation>
    <scope>NUCLEOTIDE SEQUENCE [GENOMIC DNA]</scope>
</reference>
<name>UL79_ELHVK</name>
<proteinExistence type="inferred from homology"/>
<dbReference type="EMBL" id="AF322977">
    <property type="protein sequence ID" value="ABG36575.1"/>
    <property type="molecule type" value="Genomic_DNA"/>
</dbReference>
<dbReference type="InterPro" id="IPR004290">
    <property type="entry name" value="Herpes_UL79"/>
</dbReference>
<dbReference type="Pfam" id="PF03049">
    <property type="entry name" value="Herpes_UL79"/>
    <property type="match status" value="1"/>
</dbReference>
<protein>
    <recommendedName>
        <fullName>Protein U52</fullName>
    </recommendedName>
</protein>